<comment type="function">
    <text evidence="1">Carrier of the growing fatty acid chain in fatty acid biosynthesis.</text>
</comment>
<comment type="pathway">
    <text evidence="1">Lipid metabolism; fatty acid biosynthesis.</text>
</comment>
<comment type="subcellular location">
    <subcellularLocation>
        <location evidence="1">Cytoplasm</location>
    </subcellularLocation>
</comment>
<comment type="PTM">
    <text evidence="1">4'-phosphopantetheine is transferred from CoA to a specific serine of apo-ACP by AcpS. This modification is essential for activity because fatty acids are bound in thioester linkage to the sulfhydryl of the prosthetic group.</text>
</comment>
<comment type="similarity">
    <text evidence="1">Belongs to the acyl carrier protein (ACP) family.</text>
</comment>
<name>ACP_ZYMMO</name>
<feature type="chain" id="PRO_1000066724" description="Acyl carrier protein">
    <location>
        <begin position="1"/>
        <end position="78"/>
    </location>
</feature>
<feature type="domain" description="Carrier" evidence="2">
    <location>
        <begin position="2"/>
        <end position="77"/>
    </location>
</feature>
<feature type="modified residue" description="O-(pantetheine 4'-phosphoryl)serine" evidence="2">
    <location>
        <position position="37"/>
    </location>
</feature>
<protein>
    <recommendedName>
        <fullName evidence="1">Acyl carrier protein</fullName>
        <shortName evidence="1">ACP</shortName>
    </recommendedName>
</protein>
<evidence type="ECO:0000255" key="1">
    <source>
        <dbReference type="HAMAP-Rule" id="MF_01217"/>
    </source>
</evidence>
<evidence type="ECO:0000255" key="2">
    <source>
        <dbReference type="PROSITE-ProRule" id="PRU00258"/>
    </source>
</evidence>
<dbReference type="EMBL" id="AE008692">
    <property type="protein sequence ID" value="AAV89903.1"/>
    <property type="molecule type" value="Genomic_DNA"/>
</dbReference>
<dbReference type="RefSeq" id="WP_011241084.1">
    <property type="nucleotide sequence ID" value="NZ_CP035711.1"/>
</dbReference>
<dbReference type="SMR" id="Q5NN07"/>
<dbReference type="STRING" id="264203.ZMO1279"/>
<dbReference type="KEGG" id="zmo:ZMO1279"/>
<dbReference type="eggNOG" id="COG0236">
    <property type="taxonomic scope" value="Bacteria"/>
</dbReference>
<dbReference type="HOGENOM" id="CLU_108696_5_1_5"/>
<dbReference type="UniPathway" id="UPA00094"/>
<dbReference type="Proteomes" id="UP000001173">
    <property type="component" value="Chromosome"/>
</dbReference>
<dbReference type="GO" id="GO:0005829">
    <property type="term" value="C:cytosol"/>
    <property type="evidence" value="ECO:0007669"/>
    <property type="project" value="TreeGrafter"/>
</dbReference>
<dbReference type="GO" id="GO:0016020">
    <property type="term" value="C:membrane"/>
    <property type="evidence" value="ECO:0007669"/>
    <property type="project" value="GOC"/>
</dbReference>
<dbReference type="GO" id="GO:0000035">
    <property type="term" value="F:acyl binding"/>
    <property type="evidence" value="ECO:0007669"/>
    <property type="project" value="TreeGrafter"/>
</dbReference>
<dbReference type="GO" id="GO:0000036">
    <property type="term" value="F:acyl carrier activity"/>
    <property type="evidence" value="ECO:0007669"/>
    <property type="project" value="UniProtKB-UniRule"/>
</dbReference>
<dbReference type="GO" id="GO:0009245">
    <property type="term" value="P:lipid A biosynthetic process"/>
    <property type="evidence" value="ECO:0007669"/>
    <property type="project" value="TreeGrafter"/>
</dbReference>
<dbReference type="FunFam" id="1.10.1200.10:FF:000001">
    <property type="entry name" value="Acyl carrier protein"/>
    <property type="match status" value="1"/>
</dbReference>
<dbReference type="Gene3D" id="1.10.1200.10">
    <property type="entry name" value="ACP-like"/>
    <property type="match status" value="1"/>
</dbReference>
<dbReference type="HAMAP" id="MF_01217">
    <property type="entry name" value="Acyl_carrier"/>
    <property type="match status" value="1"/>
</dbReference>
<dbReference type="InterPro" id="IPR003231">
    <property type="entry name" value="ACP"/>
</dbReference>
<dbReference type="InterPro" id="IPR036736">
    <property type="entry name" value="ACP-like_sf"/>
</dbReference>
<dbReference type="InterPro" id="IPR009081">
    <property type="entry name" value="PP-bd_ACP"/>
</dbReference>
<dbReference type="InterPro" id="IPR006162">
    <property type="entry name" value="Ppantetheine_attach_site"/>
</dbReference>
<dbReference type="NCBIfam" id="TIGR00517">
    <property type="entry name" value="acyl_carrier"/>
    <property type="match status" value="1"/>
</dbReference>
<dbReference type="NCBIfam" id="NF002148">
    <property type="entry name" value="PRK00982.1-2"/>
    <property type="match status" value="1"/>
</dbReference>
<dbReference type="NCBIfam" id="NF002149">
    <property type="entry name" value="PRK00982.1-3"/>
    <property type="match status" value="1"/>
</dbReference>
<dbReference type="NCBIfam" id="NF002150">
    <property type="entry name" value="PRK00982.1-4"/>
    <property type="match status" value="1"/>
</dbReference>
<dbReference type="NCBIfam" id="NF002151">
    <property type="entry name" value="PRK00982.1-5"/>
    <property type="match status" value="1"/>
</dbReference>
<dbReference type="PANTHER" id="PTHR20863">
    <property type="entry name" value="ACYL CARRIER PROTEIN"/>
    <property type="match status" value="1"/>
</dbReference>
<dbReference type="PANTHER" id="PTHR20863:SF76">
    <property type="entry name" value="CARRIER DOMAIN-CONTAINING PROTEIN"/>
    <property type="match status" value="1"/>
</dbReference>
<dbReference type="Pfam" id="PF00550">
    <property type="entry name" value="PP-binding"/>
    <property type="match status" value="1"/>
</dbReference>
<dbReference type="SUPFAM" id="SSF47336">
    <property type="entry name" value="ACP-like"/>
    <property type="match status" value="1"/>
</dbReference>
<dbReference type="PROSITE" id="PS50075">
    <property type="entry name" value="CARRIER"/>
    <property type="match status" value="1"/>
</dbReference>
<dbReference type="PROSITE" id="PS00012">
    <property type="entry name" value="PHOSPHOPANTETHEINE"/>
    <property type="match status" value="1"/>
</dbReference>
<sequence>MSDTAERIKKIVVEHLGVEPDKVVENASFLDDLGADSLDIIELVMAFEEEFGVEIPDDSVEKIGTVKDAVSYIDEHKA</sequence>
<organism>
    <name type="scientific">Zymomonas mobilis subsp. mobilis (strain ATCC 31821 / ZM4 / CP4)</name>
    <dbReference type="NCBI Taxonomy" id="264203"/>
    <lineage>
        <taxon>Bacteria</taxon>
        <taxon>Pseudomonadati</taxon>
        <taxon>Pseudomonadota</taxon>
        <taxon>Alphaproteobacteria</taxon>
        <taxon>Sphingomonadales</taxon>
        <taxon>Zymomonadaceae</taxon>
        <taxon>Zymomonas</taxon>
    </lineage>
</organism>
<reference key="1">
    <citation type="journal article" date="2005" name="Nat. Biotechnol.">
        <title>The genome sequence of the ethanologenic bacterium Zymomonas mobilis ZM4.</title>
        <authorList>
            <person name="Seo J.-S."/>
            <person name="Chong H."/>
            <person name="Park H.S."/>
            <person name="Yoon K.-O."/>
            <person name="Jung C."/>
            <person name="Kim J.J."/>
            <person name="Hong J.H."/>
            <person name="Kim H."/>
            <person name="Kim J.-H."/>
            <person name="Kil J.-I."/>
            <person name="Park C.J."/>
            <person name="Oh H.-M."/>
            <person name="Lee J.-S."/>
            <person name="Jin S.-J."/>
            <person name="Um H.-W."/>
            <person name="Lee H.-J."/>
            <person name="Oh S.-J."/>
            <person name="Kim J.Y."/>
            <person name="Kang H.L."/>
            <person name="Lee S.Y."/>
            <person name="Lee K.J."/>
            <person name="Kang H.S."/>
        </authorList>
    </citation>
    <scope>NUCLEOTIDE SEQUENCE [LARGE SCALE GENOMIC DNA]</scope>
    <source>
        <strain>ATCC 31821 / ZM4 / CP4</strain>
    </source>
</reference>
<gene>
    <name evidence="1" type="primary">acpP</name>
    <name type="ordered locus">ZMO1279</name>
</gene>
<proteinExistence type="inferred from homology"/>
<accession>Q5NN07</accession>
<keyword id="KW-0963">Cytoplasm</keyword>
<keyword id="KW-0275">Fatty acid biosynthesis</keyword>
<keyword id="KW-0276">Fatty acid metabolism</keyword>
<keyword id="KW-0444">Lipid biosynthesis</keyword>
<keyword id="KW-0443">Lipid metabolism</keyword>
<keyword id="KW-0596">Phosphopantetheine</keyword>
<keyword id="KW-0597">Phosphoprotein</keyword>
<keyword id="KW-1185">Reference proteome</keyword>